<feature type="chain" id="PRO_0000075895" description="Rhombotin-1">
    <location>
        <begin position="1"/>
        <end position="156"/>
    </location>
</feature>
<feature type="domain" description="LIM zinc-binding 1" evidence="1">
    <location>
        <begin position="22"/>
        <end position="84"/>
    </location>
</feature>
<feature type="domain" description="LIM zinc-binding 2" evidence="1">
    <location>
        <begin position="86"/>
        <end position="148"/>
    </location>
</feature>
<name>RBTN1_MOUSE</name>
<accession>Q924W9</accession>
<keyword id="KW-0440">LIM domain</keyword>
<keyword id="KW-0479">Metal-binding</keyword>
<keyword id="KW-0539">Nucleus</keyword>
<keyword id="KW-1185">Reference proteome</keyword>
<keyword id="KW-0677">Repeat</keyword>
<keyword id="KW-0862">Zinc</keyword>
<protein>
    <recommendedName>
        <fullName>Rhombotin-1</fullName>
    </recommendedName>
    <alternativeName>
        <fullName>Cysteine-rich protein TTG-1</fullName>
    </alternativeName>
    <alternativeName>
        <fullName>LIM domain only protein 1</fullName>
        <shortName>LMO-1</shortName>
    </alternativeName>
    <alternativeName>
        <fullName>T-cell translocation protein 1</fullName>
    </alternativeName>
</protein>
<proteinExistence type="evidence at transcript level"/>
<reference key="1">
    <citation type="journal article" date="2001" name="Cytogenet. Cell Genet.">
        <title>Comparative architectural aspects of regions of conserved synteny on human chromosome 11p15.3 and mouse chromosome 7 (including genes WEE1 and LMO1).</title>
        <authorList>
            <person name="Cichutek A."/>
            <person name="Brueckmann T."/>
            <person name="Seipel B."/>
            <person name="Hauser H."/>
            <person name="Schlaubitz S."/>
            <person name="Prawitt D."/>
            <person name="Hankeln T."/>
            <person name="Schmidt E.R."/>
            <person name="Winterpacht A."/>
            <person name="Zabel B.U."/>
        </authorList>
    </citation>
    <scope>NUCLEOTIDE SEQUENCE [GENOMIC DNA]</scope>
</reference>
<reference key="2">
    <citation type="journal article" date="2004" name="Genome Res.">
        <title>The status, quality, and expansion of the NIH full-length cDNA project: the Mammalian Gene Collection (MGC).</title>
        <authorList>
            <consortium name="The MGC Project Team"/>
        </authorList>
    </citation>
    <scope>NUCLEOTIDE SEQUENCE [LARGE SCALE MRNA]</scope>
    <source>
        <strain>C57BL/6J</strain>
        <tissue>Brain</tissue>
    </source>
</reference>
<reference key="3">
    <citation type="journal article" date="1991" name="Blood">
        <title>T-cell translocation gene 1 (Ttg-1) encodes a nuclear protein normally expressed in neural lineage cells.</title>
        <authorList>
            <person name="McGuire E.A."/>
            <person name="Davis A.R."/>
            <person name="Korsmeyer S.J."/>
        </authorList>
    </citation>
    <scope>FUNCTION</scope>
    <scope>SUBCELLULAR LOCATION</scope>
    <scope>TISSUE SPECIFICITY</scope>
</reference>
<organism>
    <name type="scientific">Mus musculus</name>
    <name type="common">Mouse</name>
    <dbReference type="NCBI Taxonomy" id="10090"/>
    <lineage>
        <taxon>Eukaryota</taxon>
        <taxon>Metazoa</taxon>
        <taxon>Chordata</taxon>
        <taxon>Craniata</taxon>
        <taxon>Vertebrata</taxon>
        <taxon>Euteleostomi</taxon>
        <taxon>Mammalia</taxon>
        <taxon>Eutheria</taxon>
        <taxon>Euarchontoglires</taxon>
        <taxon>Glires</taxon>
        <taxon>Rodentia</taxon>
        <taxon>Myomorpha</taxon>
        <taxon>Muroidea</taxon>
        <taxon>Muridae</taxon>
        <taxon>Murinae</taxon>
        <taxon>Mus</taxon>
        <taxon>Mus</taxon>
    </lineage>
</organism>
<evidence type="ECO:0000255" key="1">
    <source>
        <dbReference type="PROSITE-ProRule" id="PRU00125"/>
    </source>
</evidence>
<evidence type="ECO:0000269" key="2">
    <source>
    </source>
</evidence>
<gene>
    <name type="primary">Lmo1</name>
    <name type="synonym">Rbtn1</name>
    <name type="synonym">Rhom1</name>
    <name type="synonym">Ttg1</name>
</gene>
<comment type="function">
    <text evidence="2">May be involved in gene regulation within neural lineage cells potentially by direct DNA binding or by binding to other transcription factors.</text>
</comment>
<comment type="subcellular location">
    <subcellularLocation>
        <location evidence="2">Nucleus</location>
    </subcellularLocation>
</comment>
<comment type="tissue specificity">
    <text evidence="2">Expressed in the brain and not in the thymus.</text>
</comment>
<sequence>MMVLDKEDGVPMLSVQPKGKQKGCAGCNRKIKDRYLLKALDKYWHEDCLKCACCDCRLGEVGSTLYTKANLILCRRDYLRLFGTTGNCAACSKLIPAFEMVMRARDNVYHLDCFACQLCNQRFCVGDKFFLKNNMILCQVDYEEGHLNGTFESQVQ</sequence>
<dbReference type="EMBL" id="AJ296304">
    <property type="protein sequence ID" value="CAC39310.1"/>
    <property type="molecule type" value="Genomic_DNA"/>
</dbReference>
<dbReference type="EMBL" id="BC053074">
    <property type="protein sequence ID" value="AAH53074.1"/>
    <property type="molecule type" value="mRNA"/>
</dbReference>
<dbReference type="CCDS" id="CCDS40080.1"/>
<dbReference type="RefSeq" id="NP_001289134.1">
    <property type="nucleotide sequence ID" value="NM_001302205.1"/>
</dbReference>
<dbReference type="RefSeq" id="NP_001289135.1">
    <property type="nucleotide sequence ID" value="NM_001302206.1"/>
</dbReference>
<dbReference type="RefSeq" id="NP_001369493.1">
    <property type="nucleotide sequence ID" value="NM_001382564.1"/>
</dbReference>
<dbReference type="RefSeq" id="NP_476514.1">
    <property type="nucleotide sequence ID" value="NM_057173.4"/>
</dbReference>
<dbReference type="RefSeq" id="XP_006507258.1">
    <property type="nucleotide sequence ID" value="XM_006507195.3"/>
</dbReference>
<dbReference type="SMR" id="Q924W9"/>
<dbReference type="BioGRID" id="224887">
    <property type="interactions" value="4"/>
</dbReference>
<dbReference type="FunCoup" id="Q924W9">
    <property type="interactions" value="1005"/>
</dbReference>
<dbReference type="IntAct" id="Q924W9">
    <property type="interactions" value="4"/>
</dbReference>
<dbReference type="STRING" id="10090.ENSMUSP00000037079"/>
<dbReference type="PhosphoSitePlus" id="Q924W9"/>
<dbReference type="PaxDb" id="10090-ENSMUSP00000037079"/>
<dbReference type="ProteomicsDB" id="254901"/>
<dbReference type="Antibodypedia" id="5875">
    <property type="antibodies" value="156 antibodies from 25 providers"/>
</dbReference>
<dbReference type="DNASU" id="109594"/>
<dbReference type="Ensembl" id="ENSMUST00000036992.9">
    <property type="protein sequence ID" value="ENSMUSP00000037079.8"/>
    <property type="gene ID" value="ENSMUSG00000036111.9"/>
</dbReference>
<dbReference type="GeneID" id="109594"/>
<dbReference type="KEGG" id="mmu:109594"/>
<dbReference type="UCSC" id="uc009jdk.2">
    <property type="organism name" value="mouse"/>
</dbReference>
<dbReference type="AGR" id="MGI:102812"/>
<dbReference type="CTD" id="4004"/>
<dbReference type="MGI" id="MGI:102812">
    <property type="gene designation" value="Lmo1"/>
</dbReference>
<dbReference type="VEuPathDB" id="HostDB:ENSMUSG00000036111"/>
<dbReference type="eggNOG" id="KOG0490">
    <property type="taxonomic scope" value="Eukaryota"/>
</dbReference>
<dbReference type="GeneTree" id="ENSGT00940000153908"/>
<dbReference type="HOGENOM" id="CLU_001357_7_1_1"/>
<dbReference type="InParanoid" id="Q924W9"/>
<dbReference type="OMA" id="IRDRYML"/>
<dbReference type="OrthoDB" id="6352355at2759"/>
<dbReference type="PhylomeDB" id="Q924W9"/>
<dbReference type="TreeFam" id="TF351071"/>
<dbReference type="Reactome" id="R-MMU-8939236">
    <property type="pathway name" value="RUNX1 regulates transcription of genes involved in differentiation of HSCs"/>
</dbReference>
<dbReference type="BioGRID-ORCS" id="109594">
    <property type="hits" value="1 hit in 78 CRISPR screens"/>
</dbReference>
<dbReference type="ChiTaRS" id="Lmo1">
    <property type="organism name" value="mouse"/>
</dbReference>
<dbReference type="PRO" id="PR:Q924W9"/>
<dbReference type="Proteomes" id="UP000000589">
    <property type="component" value="Chromosome 7"/>
</dbReference>
<dbReference type="RNAct" id="Q924W9">
    <property type="molecule type" value="protein"/>
</dbReference>
<dbReference type="Bgee" id="ENSMUSG00000036111">
    <property type="expression patterns" value="Expressed in medial ganglionic eminence and 211 other cell types or tissues"/>
</dbReference>
<dbReference type="ExpressionAtlas" id="Q924W9">
    <property type="expression patterns" value="baseline and differential"/>
</dbReference>
<dbReference type="GO" id="GO:0005634">
    <property type="term" value="C:nucleus"/>
    <property type="evidence" value="ECO:0000314"/>
    <property type="project" value="UniProtKB"/>
</dbReference>
<dbReference type="GO" id="GO:0046872">
    <property type="term" value="F:metal ion binding"/>
    <property type="evidence" value="ECO:0007669"/>
    <property type="project" value="UniProtKB-KW"/>
</dbReference>
<dbReference type="GO" id="GO:0000122">
    <property type="term" value="P:negative regulation of transcription by RNA polymerase II"/>
    <property type="evidence" value="ECO:0000316"/>
    <property type="project" value="MGI"/>
</dbReference>
<dbReference type="GO" id="GO:0045944">
    <property type="term" value="P:positive regulation of transcription by RNA polymerase II"/>
    <property type="evidence" value="ECO:0000316"/>
    <property type="project" value="MGI"/>
</dbReference>
<dbReference type="GO" id="GO:0046013">
    <property type="term" value="P:regulation of T cell homeostatic proliferation"/>
    <property type="evidence" value="ECO:0000314"/>
    <property type="project" value="MGI"/>
</dbReference>
<dbReference type="CDD" id="cd09388">
    <property type="entry name" value="LIM1_LMO1_LMO3"/>
    <property type="match status" value="1"/>
</dbReference>
<dbReference type="CDD" id="cd09389">
    <property type="entry name" value="LIM2_LMO1_LMO3"/>
    <property type="match status" value="1"/>
</dbReference>
<dbReference type="FunFam" id="2.10.110.10:FF:000015">
    <property type="entry name" value="LIM domain only 3"/>
    <property type="match status" value="1"/>
</dbReference>
<dbReference type="FunFam" id="2.10.110.10:FF:000016">
    <property type="entry name" value="LIM domain only 3"/>
    <property type="match status" value="1"/>
</dbReference>
<dbReference type="Gene3D" id="2.10.110.10">
    <property type="entry name" value="Cysteine Rich Protein"/>
    <property type="match status" value="2"/>
</dbReference>
<dbReference type="InterPro" id="IPR050945">
    <property type="entry name" value="LMO_RBTN_TF"/>
</dbReference>
<dbReference type="InterPro" id="IPR001781">
    <property type="entry name" value="Znf_LIM"/>
</dbReference>
<dbReference type="PANTHER" id="PTHR45787">
    <property type="entry name" value="LD11652P"/>
    <property type="match status" value="1"/>
</dbReference>
<dbReference type="PANTHER" id="PTHR45787:SF2">
    <property type="entry name" value="RHOMBOTIN-1"/>
    <property type="match status" value="1"/>
</dbReference>
<dbReference type="Pfam" id="PF00412">
    <property type="entry name" value="LIM"/>
    <property type="match status" value="2"/>
</dbReference>
<dbReference type="SMART" id="SM00132">
    <property type="entry name" value="LIM"/>
    <property type="match status" value="2"/>
</dbReference>
<dbReference type="SUPFAM" id="SSF57716">
    <property type="entry name" value="Glucocorticoid receptor-like (DNA-binding domain)"/>
    <property type="match status" value="3"/>
</dbReference>
<dbReference type="PROSITE" id="PS00478">
    <property type="entry name" value="LIM_DOMAIN_1"/>
    <property type="match status" value="2"/>
</dbReference>
<dbReference type="PROSITE" id="PS50023">
    <property type="entry name" value="LIM_DOMAIN_2"/>
    <property type="match status" value="2"/>
</dbReference>